<reference key="1">
    <citation type="submission" date="2008-10" db="EMBL/GenBank/DDBJ databases">
        <title>Genome sequence of Bacillus cereus AH820.</title>
        <authorList>
            <person name="Dodson R.J."/>
            <person name="Durkin A.S."/>
            <person name="Rosovitz M.J."/>
            <person name="Rasko D.A."/>
            <person name="Hoffmaster A."/>
            <person name="Ravel J."/>
            <person name="Sutton G."/>
        </authorList>
    </citation>
    <scope>NUCLEOTIDE SEQUENCE [LARGE SCALE GENOMIC DNA]</scope>
    <source>
        <strain>AH820</strain>
    </source>
</reference>
<sequence>MKLLVKAPAKINLSLDVLGKRQDGYHEVKMIMTTIDLADRLELMELAEDRIEILSHNRYVPDDQRNLAYQAAKLLKEKFNVKKGVSITIEKTIPVAAGLAGGSSDAAATLRGLNKLWNLGLTIDQLAELGAEIGSDVSFCVYGGTAIATGRGEQIEHIKTPPSCWVILAKPHIGVSTADVYGNLKLNRVTHPNVDKMVDVINAGDYKGICDTVGNVLEDVTFAMHPEVARIKAQMKRFGADAVLMSGSGPTVFGLVHHDSRMHRIYNGLKGFCEQVYAVRLLGERETLE</sequence>
<proteinExistence type="inferred from homology"/>
<protein>
    <recommendedName>
        <fullName evidence="1">4-diphosphocytidyl-2-C-methyl-D-erythritol kinase</fullName>
        <shortName evidence="1">CMK</shortName>
        <ecNumber evidence="1">2.7.1.148</ecNumber>
    </recommendedName>
    <alternativeName>
        <fullName evidence="1">4-(cytidine-5'-diphospho)-2-C-methyl-D-erythritol kinase</fullName>
    </alternativeName>
</protein>
<organism>
    <name type="scientific">Bacillus cereus (strain AH820)</name>
    <dbReference type="NCBI Taxonomy" id="405535"/>
    <lineage>
        <taxon>Bacteria</taxon>
        <taxon>Bacillati</taxon>
        <taxon>Bacillota</taxon>
        <taxon>Bacilli</taxon>
        <taxon>Bacillales</taxon>
        <taxon>Bacillaceae</taxon>
        <taxon>Bacillus</taxon>
        <taxon>Bacillus cereus group</taxon>
    </lineage>
</organism>
<name>ISPE_BACC0</name>
<keyword id="KW-0067">ATP-binding</keyword>
<keyword id="KW-0414">Isoprene biosynthesis</keyword>
<keyword id="KW-0418">Kinase</keyword>
<keyword id="KW-0547">Nucleotide-binding</keyword>
<keyword id="KW-0808">Transferase</keyword>
<feature type="chain" id="PRO_1000116921" description="4-diphosphocytidyl-2-C-methyl-D-erythritol kinase">
    <location>
        <begin position="1"/>
        <end position="289"/>
    </location>
</feature>
<feature type="active site" evidence="1">
    <location>
        <position position="10"/>
    </location>
</feature>
<feature type="active site" evidence="1">
    <location>
        <position position="136"/>
    </location>
</feature>
<feature type="binding site" evidence="1">
    <location>
        <begin position="94"/>
        <end position="104"/>
    </location>
    <ligand>
        <name>ATP</name>
        <dbReference type="ChEBI" id="CHEBI:30616"/>
    </ligand>
</feature>
<evidence type="ECO:0000255" key="1">
    <source>
        <dbReference type="HAMAP-Rule" id="MF_00061"/>
    </source>
</evidence>
<gene>
    <name evidence="1" type="primary">ispE</name>
    <name type="ordered locus">BCAH820_0050</name>
</gene>
<accession>B7JK51</accession>
<dbReference type="EC" id="2.7.1.148" evidence="1"/>
<dbReference type="EMBL" id="CP001283">
    <property type="protein sequence ID" value="ACK88215.1"/>
    <property type="molecule type" value="Genomic_DNA"/>
</dbReference>
<dbReference type="SMR" id="B7JK51"/>
<dbReference type="KEGG" id="bcu:BCAH820_0050"/>
<dbReference type="HOGENOM" id="CLU_053057_1_1_9"/>
<dbReference type="UniPathway" id="UPA00056">
    <property type="reaction ID" value="UER00094"/>
</dbReference>
<dbReference type="Proteomes" id="UP000001363">
    <property type="component" value="Chromosome"/>
</dbReference>
<dbReference type="GO" id="GO:0050515">
    <property type="term" value="F:4-(cytidine 5'-diphospho)-2-C-methyl-D-erythritol kinase activity"/>
    <property type="evidence" value="ECO:0007669"/>
    <property type="project" value="UniProtKB-UniRule"/>
</dbReference>
<dbReference type="GO" id="GO:0005524">
    <property type="term" value="F:ATP binding"/>
    <property type="evidence" value="ECO:0007669"/>
    <property type="project" value="UniProtKB-UniRule"/>
</dbReference>
<dbReference type="GO" id="GO:0019288">
    <property type="term" value="P:isopentenyl diphosphate biosynthetic process, methylerythritol 4-phosphate pathway"/>
    <property type="evidence" value="ECO:0007669"/>
    <property type="project" value="UniProtKB-UniRule"/>
</dbReference>
<dbReference type="GO" id="GO:0016114">
    <property type="term" value="P:terpenoid biosynthetic process"/>
    <property type="evidence" value="ECO:0007669"/>
    <property type="project" value="InterPro"/>
</dbReference>
<dbReference type="FunFam" id="3.30.230.10:FF:000029">
    <property type="entry name" value="4-diphosphocytidyl-2-C-methyl-D-erythritol kinase"/>
    <property type="match status" value="1"/>
</dbReference>
<dbReference type="FunFam" id="3.30.70.890:FF:000006">
    <property type="entry name" value="4-diphosphocytidyl-2-C-methyl-D-erythritol kinase"/>
    <property type="match status" value="1"/>
</dbReference>
<dbReference type="Gene3D" id="3.30.230.10">
    <property type="match status" value="1"/>
</dbReference>
<dbReference type="Gene3D" id="3.30.70.890">
    <property type="entry name" value="GHMP kinase, C-terminal domain"/>
    <property type="match status" value="1"/>
</dbReference>
<dbReference type="HAMAP" id="MF_00061">
    <property type="entry name" value="IspE"/>
    <property type="match status" value="1"/>
</dbReference>
<dbReference type="InterPro" id="IPR013750">
    <property type="entry name" value="GHMP_kinase_C_dom"/>
</dbReference>
<dbReference type="InterPro" id="IPR036554">
    <property type="entry name" value="GHMP_kinase_C_sf"/>
</dbReference>
<dbReference type="InterPro" id="IPR006204">
    <property type="entry name" value="GHMP_kinase_N_dom"/>
</dbReference>
<dbReference type="InterPro" id="IPR004424">
    <property type="entry name" value="IspE"/>
</dbReference>
<dbReference type="InterPro" id="IPR020568">
    <property type="entry name" value="Ribosomal_Su5_D2-typ_SF"/>
</dbReference>
<dbReference type="InterPro" id="IPR014721">
    <property type="entry name" value="Ribsml_uS5_D2-typ_fold_subgr"/>
</dbReference>
<dbReference type="NCBIfam" id="TIGR00154">
    <property type="entry name" value="ispE"/>
    <property type="match status" value="1"/>
</dbReference>
<dbReference type="NCBIfam" id="NF011202">
    <property type="entry name" value="PRK14608.1"/>
    <property type="match status" value="1"/>
</dbReference>
<dbReference type="PANTHER" id="PTHR43527">
    <property type="entry name" value="4-DIPHOSPHOCYTIDYL-2-C-METHYL-D-ERYTHRITOL KINASE, CHLOROPLASTIC"/>
    <property type="match status" value="1"/>
</dbReference>
<dbReference type="PANTHER" id="PTHR43527:SF2">
    <property type="entry name" value="4-DIPHOSPHOCYTIDYL-2-C-METHYL-D-ERYTHRITOL KINASE, CHLOROPLASTIC"/>
    <property type="match status" value="1"/>
</dbReference>
<dbReference type="Pfam" id="PF08544">
    <property type="entry name" value="GHMP_kinases_C"/>
    <property type="match status" value="1"/>
</dbReference>
<dbReference type="Pfam" id="PF00288">
    <property type="entry name" value="GHMP_kinases_N"/>
    <property type="match status" value="1"/>
</dbReference>
<dbReference type="PIRSF" id="PIRSF010376">
    <property type="entry name" value="IspE"/>
    <property type="match status" value="1"/>
</dbReference>
<dbReference type="SUPFAM" id="SSF55060">
    <property type="entry name" value="GHMP Kinase, C-terminal domain"/>
    <property type="match status" value="1"/>
</dbReference>
<dbReference type="SUPFAM" id="SSF54211">
    <property type="entry name" value="Ribosomal protein S5 domain 2-like"/>
    <property type="match status" value="1"/>
</dbReference>
<comment type="function">
    <text evidence="1">Catalyzes the phosphorylation of the position 2 hydroxy group of 4-diphosphocytidyl-2C-methyl-D-erythritol.</text>
</comment>
<comment type="catalytic activity">
    <reaction evidence="1">
        <text>4-CDP-2-C-methyl-D-erythritol + ATP = 4-CDP-2-C-methyl-D-erythritol 2-phosphate + ADP + H(+)</text>
        <dbReference type="Rhea" id="RHEA:18437"/>
        <dbReference type="ChEBI" id="CHEBI:15378"/>
        <dbReference type="ChEBI" id="CHEBI:30616"/>
        <dbReference type="ChEBI" id="CHEBI:57823"/>
        <dbReference type="ChEBI" id="CHEBI:57919"/>
        <dbReference type="ChEBI" id="CHEBI:456216"/>
        <dbReference type="EC" id="2.7.1.148"/>
    </reaction>
</comment>
<comment type="pathway">
    <text evidence="1">Isoprenoid biosynthesis; isopentenyl diphosphate biosynthesis via DXP pathway; isopentenyl diphosphate from 1-deoxy-D-xylulose 5-phosphate: step 3/6.</text>
</comment>
<comment type="similarity">
    <text evidence="1">Belongs to the GHMP kinase family. IspE subfamily.</text>
</comment>